<sequence>MSNKGQLLQDPFLNTLRREHVPVSIYLVNGIKLQGQIESFDQYVVLLKNTVTQMVYKHAISTVVPARPVTIQQQDGEGGN</sequence>
<organism>
    <name type="scientific">Azoarcus sp. (strain BH72)</name>
    <dbReference type="NCBI Taxonomy" id="418699"/>
    <lineage>
        <taxon>Bacteria</taxon>
        <taxon>Pseudomonadati</taxon>
        <taxon>Pseudomonadota</taxon>
        <taxon>Betaproteobacteria</taxon>
        <taxon>Rhodocyclales</taxon>
        <taxon>Zoogloeaceae</taxon>
        <taxon>Azoarcus</taxon>
    </lineage>
</organism>
<comment type="function">
    <text evidence="1">RNA chaperone that binds small regulatory RNA (sRNAs) and mRNAs to facilitate mRNA translational regulation in response to envelope stress, environmental stress and changes in metabolite concentrations. Also binds with high specificity to tRNAs.</text>
</comment>
<comment type="subunit">
    <text evidence="1">Homohexamer.</text>
</comment>
<comment type="similarity">
    <text evidence="1">Belongs to the Hfq family.</text>
</comment>
<feature type="chain" id="PRO_1000025888" description="RNA-binding protein Hfq">
    <location>
        <begin position="1"/>
        <end position="80"/>
    </location>
</feature>
<feature type="domain" description="Sm" evidence="2">
    <location>
        <begin position="10"/>
        <end position="69"/>
    </location>
</feature>
<reference key="1">
    <citation type="journal article" date="2006" name="Nat. Biotechnol.">
        <title>Complete genome of the mutualistic, N2-fixing grass endophyte Azoarcus sp. strain BH72.</title>
        <authorList>
            <person name="Krause A."/>
            <person name="Ramakumar A."/>
            <person name="Bartels D."/>
            <person name="Battistoni F."/>
            <person name="Bekel T."/>
            <person name="Boch J."/>
            <person name="Boehm M."/>
            <person name="Friedrich F."/>
            <person name="Hurek T."/>
            <person name="Krause L."/>
            <person name="Linke B."/>
            <person name="McHardy A.C."/>
            <person name="Sarkar A."/>
            <person name="Schneiker S."/>
            <person name="Syed A.A."/>
            <person name="Thauer R."/>
            <person name="Vorhoelter F.-J."/>
            <person name="Weidner S."/>
            <person name="Puehler A."/>
            <person name="Reinhold-Hurek B."/>
            <person name="Kaiser O."/>
            <person name="Goesmann A."/>
        </authorList>
    </citation>
    <scope>NUCLEOTIDE SEQUENCE [LARGE SCALE GENOMIC DNA]</scope>
    <source>
        <strain>BH72</strain>
    </source>
</reference>
<protein>
    <recommendedName>
        <fullName evidence="1">RNA-binding protein Hfq</fullName>
    </recommendedName>
</protein>
<gene>
    <name evidence="1" type="primary">hfq</name>
    <name type="ordered locus">azo0932</name>
</gene>
<keyword id="KW-1185">Reference proteome</keyword>
<keyword id="KW-0694">RNA-binding</keyword>
<keyword id="KW-0346">Stress response</keyword>
<proteinExistence type="inferred from homology"/>
<name>HFQ_AZOSB</name>
<evidence type="ECO:0000255" key="1">
    <source>
        <dbReference type="HAMAP-Rule" id="MF_00436"/>
    </source>
</evidence>
<evidence type="ECO:0000255" key="2">
    <source>
        <dbReference type="PROSITE-ProRule" id="PRU01346"/>
    </source>
</evidence>
<dbReference type="EMBL" id="AM406670">
    <property type="protein sequence ID" value="CAL93549.1"/>
    <property type="molecule type" value="Genomic_DNA"/>
</dbReference>
<dbReference type="RefSeq" id="WP_011764666.1">
    <property type="nucleotide sequence ID" value="NC_008702.1"/>
</dbReference>
<dbReference type="SMR" id="A1K3Z4"/>
<dbReference type="STRING" id="62928.azo0932"/>
<dbReference type="KEGG" id="aoa:dqs_1004"/>
<dbReference type="KEGG" id="azo:azo0932"/>
<dbReference type="eggNOG" id="COG1923">
    <property type="taxonomic scope" value="Bacteria"/>
</dbReference>
<dbReference type="HOGENOM" id="CLU_113688_2_2_4"/>
<dbReference type="OrthoDB" id="9799751at2"/>
<dbReference type="Proteomes" id="UP000002588">
    <property type="component" value="Chromosome"/>
</dbReference>
<dbReference type="GO" id="GO:0005829">
    <property type="term" value="C:cytosol"/>
    <property type="evidence" value="ECO:0007669"/>
    <property type="project" value="TreeGrafter"/>
</dbReference>
<dbReference type="GO" id="GO:0003723">
    <property type="term" value="F:RNA binding"/>
    <property type="evidence" value="ECO:0007669"/>
    <property type="project" value="UniProtKB-UniRule"/>
</dbReference>
<dbReference type="GO" id="GO:0006355">
    <property type="term" value="P:regulation of DNA-templated transcription"/>
    <property type="evidence" value="ECO:0007669"/>
    <property type="project" value="InterPro"/>
</dbReference>
<dbReference type="GO" id="GO:0043487">
    <property type="term" value="P:regulation of RNA stability"/>
    <property type="evidence" value="ECO:0007669"/>
    <property type="project" value="TreeGrafter"/>
</dbReference>
<dbReference type="GO" id="GO:0045974">
    <property type="term" value="P:regulation of translation, ncRNA-mediated"/>
    <property type="evidence" value="ECO:0007669"/>
    <property type="project" value="TreeGrafter"/>
</dbReference>
<dbReference type="CDD" id="cd01716">
    <property type="entry name" value="Hfq"/>
    <property type="match status" value="1"/>
</dbReference>
<dbReference type="FunFam" id="2.30.30.100:FF:000001">
    <property type="entry name" value="RNA-binding protein Hfq"/>
    <property type="match status" value="1"/>
</dbReference>
<dbReference type="Gene3D" id="2.30.30.100">
    <property type="match status" value="1"/>
</dbReference>
<dbReference type="HAMAP" id="MF_00436">
    <property type="entry name" value="Hfq"/>
    <property type="match status" value="1"/>
</dbReference>
<dbReference type="InterPro" id="IPR005001">
    <property type="entry name" value="Hfq"/>
</dbReference>
<dbReference type="InterPro" id="IPR010920">
    <property type="entry name" value="LSM_dom_sf"/>
</dbReference>
<dbReference type="InterPro" id="IPR047575">
    <property type="entry name" value="Sm"/>
</dbReference>
<dbReference type="NCBIfam" id="TIGR02383">
    <property type="entry name" value="Hfq"/>
    <property type="match status" value="1"/>
</dbReference>
<dbReference type="NCBIfam" id="NF001602">
    <property type="entry name" value="PRK00395.1"/>
    <property type="match status" value="1"/>
</dbReference>
<dbReference type="PANTHER" id="PTHR34772">
    <property type="entry name" value="RNA-BINDING PROTEIN HFQ"/>
    <property type="match status" value="1"/>
</dbReference>
<dbReference type="PANTHER" id="PTHR34772:SF1">
    <property type="entry name" value="RNA-BINDING PROTEIN HFQ"/>
    <property type="match status" value="1"/>
</dbReference>
<dbReference type="Pfam" id="PF17209">
    <property type="entry name" value="Hfq"/>
    <property type="match status" value="1"/>
</dbReference>
<dbReference type="SUPFAM" id="SSF50182">
    <property type="entry name" value="Sm-like ribonucleoproteins"/>
    <property type="match status" value="1"/>
</dbReference>
<dbReference type="PROSITE" id="PS52002">
    <property type="entry name" value="SM"/>
    <property type="match status" value="1"/>
</dbReference>
<accession>A1K3Z4</accession>